<evidence type="ECO:0000250" key="1">
    <source>
        <dbReference type="UniProtKB" id="Q9JXV4"/>
    </source>
</evidence>
<evidence type="ECO:0000255" key="2">
    <source>
        <dbReference type="PROSITE-ProRule" id="PRU00303"/>
    </source>
</evidence>
<evidence type="ECO:0000269" key="3">
    <source>
    </source>
</evidence>
<evidence type="ECO:0000269" key="4">
    <source>
    </source>
</evidence>
<evidence type="ECO:0000269" key="5">
    <source>
    </source>
</evidence>
<evidence type="ECO:0000303" key="6">
    <source>
    </source>
</evidence>
<evidence type="ECO:0000303" key="7">
    <source>
    </source>
</evidence>
<evidence type="ECO:0000303" key="8">
    <source>
    </source>
</evidence>
<evidence type="ECO:0000305" key="9"/>
<evidence type="ECO:0000305" key="10">
    <source>
    </source>
</evidence>
<comment type="function">
    <text evidence="5 10">A bacterial surface lipoprotein that binds host (human) complement factor H (fH, gene CFH) (PubMed:16785547). Binding contributes to the avoidance of complement-mediated lysis by N.meningitidis (Probable).</text>
</comment>
<comment type="subunit">
    <text evidence="1 5">Binds to host factor H (fH from human) (PubMed:16785547). Both fHbp beta-barrels contact Sushi domains 6 and 7 in fH (also called complement control protein domains, CCP). This interaction probably mimics the normal (carbohydrate-dependent) mode of fH recruitement, regulating fH activity (By similarity).</text>
</comment>
<comment type="subcellular location">
    <subcellularLocation>
        <location evidence="5">Cell outer membrane</location>
        <topology evidence="2">Lipid-anchor</topology>
    </subcellularLocation>
    <text evidence="4">Surface exposed.</text>
</comment>
<comment type="induction">
    <text evidence="3">Expressed at high levels in this strain (at protein level).</text>
</comment>
<comment type="domain">
    <text evidence="1">Structures show there are 2 beta barrel domains, 51-156 and 167-274 each form an 8-stranded antiparallel beta-barrel joined by linker between 157-166.</text>
</comment>
<comment type="disruption phenotype">
    <text evidence="5">Bacteria no longer bind fH and are more sensitive to complement-mediated killing.</text>
</comment>
<comment type="biotechnology">
    <text evidence="3 4">Part of an outer membrane vesicle vaccine; antisera against this protein induce efficient complement-mediated killing of the homologous strain. Three antigenic variant groups were detected upon sequencing of group B strains; antibodies against a single variant group provide reduced protection against the other 2 groups. Recombinant protein lipidation increases its immunogenicity.</text>
</comment>
<comment type="miscellaneous">
    <text evidence="9">One of the major antigens of group B N.meningitidis and a powerful protective antigen. It is highly variable, at least 300 protein variants have been seen (see Factor H binding protein sequence typing below).</text>
</comment>
<comment type="similarity">
    <text evidence="9">Belongs to the factor H binding-protein family.</text>
</comment>
<comment type="sequence caution" evidence="9">
    <conflict type="erroneous initiation">
        <sequence resource="EMBL-CDS" id="EFV64429"/>
    </conflict>
    <text>Extended N-terminus.</text>
</comment>
<comment type="online information" name="Factor H binding protein sequence typing">
    <link uri="https://pubmlst.org/organisms/neisseria-spp/fhbp"/>
</comment>
<comment type="online information" name="Bexsero meningococcal group B Vaccine">
    <link uri="https://www.ema.europa.eu/en/medicines/human/EPAR/bexsero"/>
</comment>
<reference key="1">
    <citation type="journal article" date="2011" name="J. Bacteriol.">
        <title>Genome sequence of Neisseria meningitidis serogroup B strain H44/76.</title>
        <authorList>
            <person name="Piet J.R."/>
            <person name="Huis In 't Veld R.A."/>
            <person name="van Schaik B.D."/>
            <person name="van Kampen A.H."/>
            <person name="Baas F."/>
            <person name="van de Beek D."/>
            <person name="Pannekoek Y."/>
            <person name="van der Ende A."/>
        </authorList>
    </citation>
    <scope>NUCLEOTIDE SEQUENCE [LARGE SCALE GENOMIC DNA]</scope>
    <source>
        <strain>H44/76</strain>
    </source>
</reference>
<reference key="2">
    <citation type="journal article" date="2003" name="J. Exp. Med.">
        <title>Vaccination against Neisseria meningitidis using three variants of the lipoprotein GNA1870.</title>
        <authorList>
            <person name="Masignani V."/>
            <person name="Comanducci M."/>
            <person name="Giuliani M.M."/>
            <person name="Bambini S."/>
            <person name="Adu-Bobie J."/>
            <person name="Arico B."/>
            <person name="Brunelli B."/>
            <person name="Pieri A."/>
            <person name="Santini L."/>
            <person name="Savino S."/>
            <person name="Serruto D."/>
            <person name="Litt D."/>
            <person name="Kroll S."/>
            <person name="Welsch J.A."/>
            <person name="Granoff D.M."/>
            <person name="Rappuoli R."/>
            <person name="Pizza M."/>
        </authorList>
    </citation>
    <scope>INDUCTION</scope>
    <scope>BIOTECHNOLOGY (VACCINE PRODUCTION)</scope>
    <source>
        <strain>H44/76</strain>
    </source>
</reference>
<reference key="3">
    <citation type="journal article" date="2004" name="Infect. Immun.">
        <title>Vaccine potential of the Neisseria meningitidis 2086 lipoprotein.</title>
        <authorList>
            <person name="Fletcher L.D."/>
            <person name="Bernfield L."/>
            <person name="Barniak V."/>
            <person name="Farley J.E."/>
            <person name="Howell A."/>
            <person name="Knauf M."/>
            <person name="Ooi P."/>
            <person name="Smith R.P."/>
            <person name="Weise P."/>
            <person name="Wetherell M."/>
            <person name="Xie X."/>
            <person name="Zagursky R."/>
            <person name="Zhang Y."/>
            <person name="Zlotnick G.W."/>
        </authorList>
    </citation>
    <scope>NUCLEOTIDE SEQUENCE [GENOMIC DNA] OF 20-274</scope>
    <scope>SUBCELLULAR LOCATION</scope>
    <scope>BIOTECHNOLOGY (VACCINE PRODUCTION)</scope>
    <source>
        <strain>H44/76</strain>
    </source>
</reference>
<reference key="4">
    <citation type="journal article" date="2017" name="Infect. Immun.">
        <authorList>
            <person name="Fletcher L.D."/>
            <person name="Bernfield L."/>
            <person name="Barniak V."/>
            <person name="Farley J.E."/>
            <person name="Howell A."/>
            <person name="Knauf M."/>
            <person name="Ooi P."/>
            <person name="Smith R.P."/>
            <person name="Weise P."/>
            <person name="Wetherell M."/>
            <person name="Xie X."/>
            <person name="Zagursky R."/>
            <person name="Zhang Y."/>
            <person name="Zlotnick G.W."/>
        </authorList>
    </citation>
    <scope>ERRATUM OF PUBMED:15039331</scope>
</reference>
<reference key="5">
    <citation type="journal article" date="2006" name="J. Immunol.">
        <title>The meningococcal vaccine candidate GNA1870 binds the complement regulatory protein factor H and enhances serum resistance.</title>
        <authorList>
            <person name="Madico G."/>
            <person name="Welsch J.A."/>
            <person name="Lewis L.A."/>
            <person name="McNaughton A."/>
            <person name="Perlman D.H."/>
            <person name="Costello C.E."/>
            <person name="Ngampasutadol J."/>
            <person name="Vogel U."/>
            <person name="Granoff D.M."/>
            <person name="Ram S."/>
        </authorList>
    </citation>
    <scope>IDENTIFICATION BY MASS SPECTROMETRY</scope>
    <scope>INTERACTION WITH HOST FACTOR H</scope>
    <scope>SUBCELLULAR LOCATION</scope>
    <scope>DISRUPTION PHENOTYPE</scope>
    <source>
        <strain>H44/76</strain>
    </source>
</reference>
<feature type="signal peptide" evidence="2">
    <location>
        <begin position="1"/>
        <end position="19"/>
    </location>
</feature>
<feature type="chain" id="PRO_0000455081" description="Factor H binding protein" evidence="2">
    <location>
        <begin position="20"/>
        <end position="274"/>
    </location>
</feature>
<feature type="lipid moiety-binding region" description="N-palmitoyl cysteine" evidence="2">
    <location>
        <position position="20"/>
    </location>
</feature>
<feature type="lipid moiety-binding region" description="S-diacylglycerol cysteine" evidence="2">
    <location>
        <position position="20"/>
    </location>
</feature>
<keyword id="KW-0998">Cell outer membrane</keyword>
<keyword id="KW-0449">Lipoprotein</keyword>
<keyword id="KW-0472">Membrane</keyword>
<keyword id="KW-0564">Palmitate</keyword>
<keyword id="KW-0732">Signal</keyword>
<keyword id="KW-0843">Virulence</keyword>
<sequence length="274" mass="28990">MNRTAFCCLSLTTALILTACSSGGGGVAADIGAGLADALTAPLDHKDKGLQSLTLDQSVRKNEKLKLAAQGAEKTYGNGDSLNTGKLKNDKVSRFDFIRQIEVDGQLITLESGEFQVYKQSHSALTAFQTEQIQDSEHSGKMVAKRQFRIGDIAGEHTSFDKLPEGGRATYRGTAFGSDDAGGKLTYTIDFAAKQGNGKIEHLKSPELNVDLAAADIKPDGKRHAVISGSVLYNQAEKGSYSLGIFGGKAQEVAGSAEVKTVNGIRHIGLAAKQ</sequence>
<dbReference type="EMBL" id="AEQZ01000011">
    <property type="protein sequence ID" value="EFV64429.1"/>
    <property type="status" value="ALT_INIT"/>
    <property type="molecule type" value="Genomic_DNA"/>
</dbReference>
<dbReference type="EMBL" id="AY330397">
    <property type="protein sequence ID" value="AAR84472.1"/>
    <property type="molecule type" value="Genomic_DNA"/>
</dbReference>
<dbReference type="SMR" id="E6MV22"/>
<dbReference type="ABCD" id="E6MV22">
    <property type="antibodies" value="2 sequenced antibodies"/>
</dbReference>
<dbReference type="KEGG" id="nmh:NMBH4476_1812"/>
<dbReference type="PATRIC" id="fig|909420.4.peg.474"/>
<dbReference type="Proteomes" id="UP000032707">
    <property type="component" value="Unassembled WGS sequence"/>
</dbReference>
<dbReference type="GO" id="GO:0009279">
    <property type="term" value="C:cell outer membrane"/>
    <property type="evidence" value="ECO:0007669"/>
    <property type="project" value="UniProtKB-SubCell"/>
</dbReference>
<dbReference type="Gene3D" id="2.40.160.90">
    <property type="match status" value="1"/>
</dbReference>
<dbReference type="Gene3D" id="2.60.40.1980">
    <property type="match status" value="1"/>
</dbReference>
<dbReference type="InterPro" id="IPR049378">
    <property type="entry name" value="FHBP"/>
</dbReference>
<dbReference type="InterPro" id="IPR014902">
    <property type="entry name" value="FHBP-like_C"/>
</dbReference>
<dbReference type="InterPro" id="IPR049377">
    <property type="entry name" value="FHBP_N"/>
</dbReference>
<dbReference type="InterPro" id="IPR011250">
    <property type="entry name" value="OMP/PagP_b-brl"/>
</dbReference>
<dbReference type="NCBIfam" id="NF041466">
    <property type="entry name" value="factorH_bind"/>
    <property type="match status" value="1"/>
</dbReference>
<dbReference type="Pfam" id="PF08794">
    <property type="entry name" value="FHBP_C"/>
    <property type="match status" value="1"/>
</dbReference>
<dbReference type="Pfam" id="PF20937">
    <property type="entry name" value="FHBP_N"/>
    <property type="match status" value="1"/>
</dbReference>
<dbReference type="SUPFAM" id="SSF56925">
    <property type="entry name" value="OMPA-like"/>
    <property type="match status" value="1"/>
</dbReference>
<dbReference type="PROSITE" id="PS51257">
    <property type="entry name" value="PROKAR_LIPOPROTEIN"/>
    <property type="match status" value="1"/>
</dbReference>
<gene>
    <name type="primary">fhbP</name>
    <name type="ORF">NMH_0027</name>
</gene>
<accession>E6MV22</accession>
<name>FHBP_NEIMH</name>
<protein>
    <recommendedName>
        <fullName evidence="8">Factor H binding protein</fullName>
        <shortName evidence="8">fHbp</shortName>
    </recommendedName>
    <alternativeName>
        <fullName evidence="6">Genome-derived Neisseria antigen 1870</fullName>
        <shortName evidence="6">GNA1870</shortName>
    </alternativeName>
    <alternativeName>
        <fullName evidence="7">Lipoprotein 2086</fullName>
        <shortName evidence="7">LP2086</shortName>
    </alternativeName>
</protein>
<proteinExistence type="evidence at protein level"/>
<organism>
    <name type="scientific">Neisseria meningitidis serogroup B / serotype 15 (strain H44/76)</name>
    <dbReference type="NCBI Taxonomy" id="909420"/>
    <lineage>
        <taxon>Bacteria</taxon>
        <taxon>Pseudomonadati</taxon>
        <taxon>Pseudomonadota</taxon>
        <taxon>Betaproteobacteria</taxon>
        <taxon>Neisseriales</taxon>
        <taxon>Neisseriaceae</taxon>
        <taxon>Neisseria</taxon>
    </lineage>
</organism>